<reference key="1">
    <citation type="submission" date="2004-03" db="EMBL/GenBank/DDBJ databases">
        <authorList>
            <consortium name="NIH - Zebrafish Gene Collection (ZGC) project"/>
        </authorList>
    </citation>
    <scope>NUCLEOTIDE SEQUENCE [LARGE SCALE MRNA]</scope>
    <source>
        <tissue>Embryo</tissue>
    </source>
</reference>
<accession>Q6NVC9</accession>
<proteinExistence type="evidence at transcript level"/>
<evidence type="ECO:0000250" key="1">
    <source>
        <dbReference type="UniProtKB" id="Q8N9B5"/>
    </source>
</evidence>
<evidence type="ECO:0000250" key="2">
    <source>
        <dbReference type="UniProtKB" id="Q9QXM1"/>
    </source>
</evidence>
<evidence type="ECO:0000255" key="3"/>
<evidence type="ECO:0000255" key="4">
    <source>
        <dbReference type="PROSITE-ProRule" id="PRU00406"/>
    </source>
</evidence>
<evidence type="ECO:0000256" key="5">
    <source>
        <dbReference type="SAM" id="MobiDB-lite"/>
    </source>
</evidence>
<evidence type="ECO:0000305" key="6"/>
<organism>
    <name type="scientific">Danio rerio</name>
    <name type="common">Zebrafish</name>
    <name type="synonym">Brachydanio rerio</name>
    <dbReference type="NCBI Taxonomy" id="7955"/>
    <lineage>
        <taxon>Eukaryota</taxon>
        <taxon>Metazoa</taxon>
        <taxon>Chordata</taxon>
        <taxon>Craniata</taxon>
        <taxon>Vertebrata</taxon>
        <taxon>Euteleostomi</taxon>
        <taxon>Actinopterygii</taxon>
        <taxon>Neopterygii</taxon>
        <taxon>Teleostei</taxon>
        <taxon>Ostariophysi</taxon>
        <taxon>Cypriniformes</taxon>
        <taxon>Danionidae</taxon>
        <taxon>Danioninae</taxon>
        <taxon>Danio</taxon>
    </lineage>
</organism>
<sequence length="846" mass="96380">MSFAMEDAIESGWVSVRPNVFEEKEKHKFVFIVAWNEIEGKFAVTCHNRTVQKRSAERDSLLEAAEGELAAAADTDRRTARPAHRSPGRERSGGQSSPSAAAELELLDAAEDAELSARQDSSWAGLFSFQDLRAAHLQLCAVNADLEPCLPALPEEQTGVWSVLFGVPEMSARDTDALCFQLQVYLGHALDTCGWRILSQVLFPDSEDAEEYYESLSELRQKGYEDALQRAKRRLQQLLEQQRAVERMVELLQLYSEQDEAYGELVEATTELYHYLLQPFRDMRELAMLRRQQIKISLETERLGPRRVESLRREDEDWQRKAHTAVLSIQDLTVKYFETTARAQKVMYERMRADQRKFGKAAWGAAVERMERLQYAVSKETLQLMRAKEICLEQRKHGLREEMQGLQGGEDAMARLDQLEALYYELQLQLYEIQFEILKNEELLLTAQLQSLRRQMSERQEEVVYYDTFESPDAMKATEDPAQPQTPRDDINKLQQRTRQLEARRGRITAKKAYLKNKKEICIINHTQKLQQRQAGAHGVSQQPLLQDEEDEEEQRLSRVSQERQRTLDRLRSFKQRYPGQVTLKSTRLRLAFSRKKALRAEQMQTQTQPQTQAASVQTDDAPAPLEPPSAVPELCRPDSFLSLPPMGGAVAEAPPSAELTSLPPARELLLLDSSTSPMSPPPPPPPPPPPPPPMLEDFPPRSPPEPQSPLGPFSARFFDSSQLLNARKKLRKTASLESSQWRRASSPMDEVLASLKRGSFHLRKAELRVLAPDPDEDDGNNILAQIRKGVKLRKVRRQERSARAIMADSADPLTRSIHEALRRIKEASPESESEDDTPTATDWES</sequence>
<comment type="function">
    <text evidence="1 2">Acts both as a nuclear p53/TP53-cofactor and a cytoplasmic regulator of actin dynamics depending on conditions. In nucleus, acts as a cofactor that increases p53/TP53 response. Increases p53/TP53-dependent transcription and apoptosis, suggesting an important role in p53/TP53 stress response such as DNA damage. In cytoplasm, acts as a nucleation-promoting factor for both branched and unbranched actin filaments. Activates the Arp2/3 complex to induce branched actin filament networks. Also catalyzes actin polymerization in the absence of Arp2/3, creating unbranched filaments. Contributes to cell motility by controlling actin dynamics.</text>
</comment>
<comment type="subcellular location">
    <subcellularLocation>
        <location evidence="2">Nucleus</location>
    </subcellularLocation>
    <subcellularLocation>
        <location evidence="1">Cytoplasmic vesicle</location>
    </subcellularLocation>
    <subcellularLocation>
        <location evidence="1">Cytoplasm</location>
        <location evidence="1">Cytoskeleton</location>
    </subcellularLocation>
    <subcellularLocation>
        <location>Endomembrane system</location>
        <topology>Lipid-anchor</topology>
    </subcellularLocation>
    <subcellularLocation>
        <location evidence="1">Cytoplasmic vesicle</location>
        <location evidence="1">Autophagosome membrane</location>
    </subcellularLocation>
    <text evidence="2">Localizes to the nucleus in most cell types. In primary neutrophils, it colocalizes with actin filaments at the leading edge and is excluded from the nucleus (By similarity).</text>
</comment>
<comment type="similarity">
    <text evidence="6">Belongs to the JMY family.</text>
</comment>
<protein>
    <recommendedName>
        <fullName>Junction-mediating and -regulatory protein</fullName>
    </recommendedName>
</protein>
<dbReference type="EMBL" id="BC068186">
    <property type="protein sequence ID" value="AAH68186.1"/>
    <property type="molecule type" value="mRNA"/>
</dbReference>
<dbReference type="RefSeq" id="NP_998437.1">
    <property type="nucleotide sequence ID" value="NM_213272.1"/>
</dbReference>
<dbReference type="FunCoup" id="Q6NVC9">
    <property type="interactions" value="1075"/>
</dbReference>
<dbReference type="PaxDb" id="7955-ENSDARP00000119835"/>
<dbReference type="GeneID" id="406556"/>
<dbReference type="KEGG" id="dre:406556"/>
<dbReference type="AGR" id="ZFIN:ZDB-GENE-040426-2433"/>
<dbReference type="CTD" id="133746"/>
<dbReference type="ZFIN" id="ZDB-GENE-040426-2433">
    <property type="gene designation" value="jmy"/>
</dbReference>
<dbReference type="eggNOG" id="ENOG502QRHU">
    <property type="taxonomic scope" value="Eukaryota"/>
</dbReference>
<dbReference type="InParanoid" id="Q6NVC9"/>
<dbReference type="OrthoDB" id="6284683at2759"/>
<dbReference type="PhylomeDB" id="Q6NVC9"/>
<dbReference type="PRO" id="PR:Q6NVC9"/>
<dbReference type="Proteomes" id="UP000000437">
    <property type="component" value="Chromosome 21"/>
</dbReference>
<dbReference type="GO" id="GO:0000421">
    <property type="term" value="C:autophagosome membrane"/>
    <property type="evidence" value="ECO:0000250"/>
    <property type="project" value="UniProtKB"/>
</dbReference>
<dbReference type="GO" id="GO:0031252">
    <property type="term" value="C:cell leading edge"/>
    <property type="evidence" value="ECO:0000250"/>
    <property type="project" value="UniProtKB"/>
</dbReference>
<dbReference type="GO" id="GO:0005737">
    <property type="term" value="C:cytoplasm"/>
    <property type="evidence" value="ECO:0000318"/>
    <property type="project" value="GO_Central"/>
</dbReference>
<dbReference type="GO" id="GO:0031410">
    <property type="term" value="C:cytoplasmic vesicle"/>
    <property type="evidence" value="ECO:0000250"/>
    <property type="project" value="UniProtKB"/>
</dbReference>
<dbReference type="GO" id="GO:0005856">
    <property type="term" value="C:cytoskeleton"/>
    <property type="evidence" value="ECO:0007669"/>
    <property type="project" value="UniProtKB-SubCell"/>
</dbReference>
<dbReference type="GO" id="GO:0012505">
    <property type="term" value="C:endomembrane system"/>
    <property type="evidence" value="ECO:0007669"/>
    <property type="project" value="UniProtKB-SubCell"/>
</dbReference>
<dbReference type="GO" id="GO:0005634">
    <property type="term" value="C:nucleus"/>
    <property type="evidence" value="ECO:0000250"/>
    <property type="project" value="UniProtKB"/>
</dbReference>
<dbReference type="GO" id="GO:0003779">
    <property type="term" value="F:actin binding"/>
    <property type="evidence" value="ECO:0007669"/>
    <property type="project" value="UniProtKB-KW"/>
</dbReference>
<dbReference type="GO" id="GO:0071933">
    <property type="term" value="F:Arp2/3 complex binding"/>
    <property type="evidence" value="ECO:0000318"/>
    <property type="project" value="GO_Central"/>
</dbReference>
<dbReference type="GO" id="GO:0008017">
    <property type="term" value="F:microtubule binding"/>
    <property type="evidence" value="ECO:0000250"/>
    <property type="project" value="UniProtKB"/>
</dbReference>
<dbReference type="GO" id="GO:0003713">
    <property type="term" value="F:transcription coactivator activity"/>
    <property type="evidence" value="ECO:0000318"/>
    <property type="project" value="GO_Central"/>
</dbReference>
<dbReference type="GO" id="GO:0070060">
    <property type="term" value="P:'de novo' actin filament nucleation"/>
    <property type="evidence" value="ECO:0000250"/>
    <property type="project" value="UniProtKB"/>
</dbReference>
<dbReference type="GO" id="GO:0070358">
    <property type="term" value="P:actin polymerization-dependent cell motility"/>
    <property type="evidence" value="ECO:0000250"/>
    <property type="project" value="UniProtKB"/>
</dbReference>
<dbReference type="GO" id="GO:0034314">
    <property type="term" value="P:Arp2/3 complex-mediated actin nucleation"/>
    <property type="evidence" value="ECO:0000250"/>
    <property type="project" value="UniProtKB"/>
</dbReference>
<dbReference type="GO" id="GO:0009267">
    <property type="term" value="P:cellular response to starvation"/>
    <property type="evidence" value="ECO:0000250"/>
    <property type="project" value="UniProtKB"/>
</dbReference>
<dbReference type="GO" id="GO:0006281">
    <property type="term" value="P:DNA repair"/>
    <property type="evidence" value="ECO:0007669"/>
    <property type="project" value="UniProtKB-KW"/>
</dbReference>
<dbReference type="GO" id="GO:0072332">
    <property type="term" value="P:intrinsic apoptotic signaling pathway by p53 class mediator"/>
    <property type="evidence" value="ECO:0000318"/>
    <property type="project" value="GO_Central"/>
</dbReference>
<dbReference type="GO" id="GO:0043065">
    <property type="term" value="P:positive regulation of apoptotic process"/>
    <property type="evidence" value="ECO:0000318"/>
    <property type="project" value="GO_Central"/>
</dbReference>
<dbReference type="InterPro" id="IPR031738">
    <property type="entry name" value="JMY/WHAMM"/>
</dbReference>
<dbReference type="InterPro" id="IPR031808">
    <property type="entry name" value="JMY/WHAMM_N"/>
</dbReference>
<dbReference type="InterPro" id="IPR003124">
    <property type="entry name" value="WH2_dom"/>
</dbReference>
<dbReference type="PANTHER" id="PTHR23330:SF8">
    <property type="entry name" value="JUNCTION-MEDIATING AND -REGULATORY PROTEIN"/>
    <property type="match status" value="1"/>
</dbReference>
<dbReference type="PANTHER" id="PTHR23330">
    <property type="entry name" value="P300 TRANSCRIPTIONAL COFACTOR JMY-RELATED"/>
    <property type="match status" value="1"/>
</dbReference>
<dbReference type="Pfam" id="PF15871">
    <property type="entry name" value="JMY"/>
    <property type="match status" value="1"/>
</dbReference>
<dbReference type="Pfam" id="PF15920">
    <property type="entry name" value="WHAMM-JMY_N"/>
    <property type="match status" value="1"/>
</dbReference>
<dbReference type="PROSITE" id="PS51082">
    <property type="entry name" value="WH2"/>
    <property type="match status" value="1"/>
</dbReference>
<keyword id="KW-0009">Actin-binding</keyword>
<keyword id="KW-0175">Coiled coil</keyword>
<keyword id="KW-0963">Cytoplasm</keyword>
<keyword id="KW-0968">Cytoplasmic vesicle</keyword>
<keyword id="KW-0206">Cytoskeleton</keyword>
<keyword id="KW-0227">DNA damage</keyword>
<keyword id="KW-0234">DNA repair</keyword>
<keyword id="KW-0449">Lipoprotein</keyword>
<keyword id="KW-0472">Membrane</keyword>
<keyword id="KW-0539">Nucleus</keyword>
<keyword id="KW-1185">Reference proteome</keyword>
<gene>
    <name type="primary">jmy</name>
    <name type="ORF">zgc:77377</name>
</gene>
<name>JMY_DANRE</name>
<feature type="chain" id="PRO_0000324613" description="Junction-mediating and -regulatory protein">
    <location>
        <begin position="1"/>
        <end position="846"/>
    </location>
</feature>
<feature type="domain" description="WH2" evidence="4">
    <location>
        <begin position="779"/>
        <end position="796"/>
    </location>
</feature>
<feature type="region of interest" description="Disordered" evidence="5">
    <location>
        <begin position="68"/>
        <end position="100"/>
    </location>
</feature>
<feature type="region of interest" description="Disordered" evidence="5">
    <location>
        <begin position="472"/>
        <end position="494"/>
    </location>
</feature>
<feature type="region of interest" description="Disordered" evidence="5">
    <location>
        <begin position="533"/>
        <end position="572"/>
    </location>
</feature>
<feature type="region of interest" description="Disordered" evidence="5">
    <location>
        <begin position="598"/>
        <end position="717"/>
    </location>
</feature>
<feature type="region of interest" description="Disordered" evidence="5">
    <location>
        <begin position="822"/>
        <end position="846"/>
    </location>
</feature>
<feature type="coiled-coil region" evidence="3">
    <location>
        <begin position="216"/>
        <end position="254"/>
    </location>
</feature>
<feature type="coiled-coil region" evidence="3">
    <location>
        <begin position="410"/>
        <end position="513"/>
    </location>
</feature>
<feature type="coiled-coil region" evidence="3">
    <location>
        <begin position="545"/>
        <end position="574"/>
    </location>
</feature>
<feature type="compositionally biased region" description="Polar residues" evidence="5">
    <location>
        <begin position="533"/>
        <end position="544"/>
    </location>
</feature>
<feature type="compositionally biased region" description="Basic and acidic residues" evidence="5">
    <location>
        <begin position="555"/>
        <end position="572"/>
    </location>
</feature>
<feature type="compositionally biased region" description="Low complexity" evidence="5">
    <location>
        <begin position="601"/>
        <end position="619"/>
    </location>
</feature>
<feature type="compositionally biased region" description="Pro residues" evidence="5">
    <location>
        <begin position="679"/>
        <end position="710"/>
    </location>
</feature>
<feature type="compositionally biased region" description="Acidic residues" evidence="5">
    <location>
        <begin position="830"/>
        <end position="846"/>
    </location>
</feature>